<organism>
    <name type="scientific">Viola odorata</name>
    <name type="common">Sweet violet</name>
    <dbReference type="NCBI Taxonomy" id="97441"/>
    <lineage>
        <taxon>Eukaryota</taxon>
        <taxon>Viridiplantae</taxon>
        <taxon>Streptophyta</taxon>
        <taxon>Embryophyta</taxon>
        <taxon>Tracheophyta</taxon>
        <taxon>Spermatophyta</taxon>
        <taxon>Magnoliopsida</taxon>
        <taxon>eudicotyledons</taxon>
        <taxon>Gunneridae</taxon>
        <taxon>Pentapetalae</taxon>
        <taxon>rosids</taxon>
        <taxon>fabids</taxon>
        <taxon>Malpighiales</taxon>
        <taxon>Violaceae</taxon>
        <taxon>Viola</taxon>
        <taxon>Viola subgen. Viola</taxon>
        <taxon>Viola sect. Viola</taxon>
        <taxon>Viola subsect. Viola</taxon>
    </lineage>
</organism>
<name>CYO8_VIOOD</name>
<sequence length="118" mass="12477">MEMKNMVVGLFLIAAFALPALATNFEKDFITHETVQAILKKVGPSSNGMLDEQTISALTGKTIISNPVLEEALLTHSNSINALGGTLPCGESCVWIPCISSVVGCSCKSKVCYKNSLA</sequence>
<keyword id="KW-0903">Direct protein sequencing</keyword>
<keyword id="KW-1015">Disulfide bond</keyword>
<keyword id="KW-0960">Knottin</keyword>
<keyword id="KW-0611">Plant defense</keyword>
<keyword id="KW-0732">Signal</keyword>
<evidence type="ECO:0000255" key="1"/>
<evidence type="ECO:0000255" key="2">
    <source>
        <dbReference type="PROSITE-ProRule" id="PRU00395"/>
    </source>
</evidence>
<evidence type="ECO:0000269" key="3">
    <source>
    </source>
</evidence>
<evidence type="ECO:0000269" key="4">
    <source>
    </source>
</evidence>
<evidence type="ECO:0000305" key="5"/>
<gene>
    <name type="primary">Voc1</name>
</gene>
<dbReference type="EMBL" id="AY630564">
    <property type="protein sequence ID" value="AAU04393.1"/>
    <property type="molecule type" value="mRNA"/>
</dbReference>
<dbReference type="SMR" id="P58440"/>
<dbReference type="TCDB" id="1.A.118.1.2">
    <property type="family name" value="the plant cycltide (cyclotide) family"/>
</dbReference>
<dbReference type="GO" id="GO:0006952">
    <property type="term" value="P:defense response"/>
    <property type="evidence" value="ECO:0000250"/>
    <property type="project" value="UniProtKB"/>
</dbReference>
<dbReference type="InterPro" id="IPR005535">
    <property type="entry name" value="Cyclotide"/>
</dbReference>
<dbReference type="InterPro" id="IPR012323">
    <property type="entry name" value="Cyclotide_bracelet_CS"/>
</dbReference>
<dbReference type="InterPro" id="IPR036146">
    <property type="entry name" value="Cyclotide_sf"/>
</dbReference>
<dbReference type="Pfam" id="PF03784">
    <property type="entry name" value="Cyclotide"/>
    <property type="match status" value="1"/>
</dbReference>
<dbReference type="SUPFAM" id="SSF57038">
    <property type="entry name" value="Cyclotides"/>
    <property type="match status" value="1"/>
</dbReference>
<dbReference type="PROSITE" id="PS51052">
    <property type="entry name" value="CYCLOTIDE"/>
    <property type="match status" value="1"/>
</dbReference>
<dbReference type="PROSITE" id="PS60008">
    <property type="entry name" value="CYCLOTIDE_BRACELET"/>
    <property type="match status" value="1"/>
</dbReference>
<proteinExistence type="evidence at protein level"/>
<accession>P58440</accession>
<accession>Q5USN9</accession>
<feature type="signal peptide" evidence="1">
    <location>
        <begin position="1"/>
        <end position="22"/>
    </location>
</feature>
<feature type="propeptide" id="PRO_0000294936">
    <location>
        <begin position="23"/>
        <end position="84"/>
    </location>
</feature>
<feature type="peptide" id="PRO_0000043615" description="Cycloviolacin-O8">
    <location>
        <begin position="85"/>
        <end position="115"/>
    </location>
</feature>
<feature type="propeptide" id="PRO_0000294937">
    <location>
        <begin position="116"/>
        <end position="118"/>
    </location>
</feature>
<feature type="disulfide bond">
    <location>
        <begin position="89"/>
        <end position="105"/>
    </location>
</feature>
<feature type="disulfide bond">
    <location>
        <begin position="93"/>
        <end position="107"/>
    </location>
</feature>
<feature type="disulfide bond">
    <location>
        <begin position="98"/>
        <end position="112"/>
    </location>
</feature>
<feature type="cross-link" description="Cyclopeptide (Gly-Asn)">
    <location>
        <begin position="85"/>
        <end position="115"/>
    </location>
</feature>
<feature type="sequence conflict" description="In Ref. 2; AA sequence." evidence="5" ref="2">
    <location>
        <position position="90"/>
    </location>
</feature>
<reference key="1">
    <citation type="journal article" date="2004" name="J. Biol. Chem.">
        <title>Conserved structural and sequence elements implicated in the processing of gene-encoded circular proteins.</title>
        <authorList>
            <person name="Dutton J.L."/>
            <person name="Renda R.F."/>
            <person name="Waine C."/>
            <person name="Clark R.J."/>
            <person name="Daly N.L."/>
            <person name="Jennings C.V."/>
            <person name="Anderson M.A."/>
            <person name="Craik D.J."/>
        </authorList>
    </citation>
    <scope>NUCLEOTIDE SEQUENCE [MRNA]</scope>
    <source>
        <tissue>Leaf</tissue>
    </source>
</reference>
<reference key="2">
    <citation type="journal article" date="1999" name="J. Mol. Biol.">
        <title>Plant cyclotides: a unique family of cyclic and knotted proteins that defines the cyclic cystine knot structural motif.</title>
        <authorList>
            <person name="Craik D.J."/>
            <person name="Daly N.L."/>
            <person name="Bond T."/>
            <person name="Waine C."/>
        </authorList>
    </citation>
    <scope>PROTEIN SEQUENCE OF 85-115</scope>
</reference>
<reference key="3">
    <citation type="journal article" date="2006" name="Biochem. J.">
        <title>A novel suite of cyclotides from Viola odorata: sequence variation and the implications for structure, function and stability.</title>
        <authorList>
            <person name="Ireland D.C."/>
            <person name="Colgrave M.L."/>
            <person name="Craik D.J."/>
        </authorList>
    </citation>
    <scope>PROTEIN SEQUENCE OF 85-115</scope>
    <scope>MASS SPECTROMETRY</scope>
</reference>
<reference key="4">
    <citation type="journal article" date="2017" name="J. Nat. Prod.">
        <title>Cyclotides from the Indian Medicinal Plant Viola odorata (Banafsha): Identification and Characterization.</title>
        <authorList>
            <person name="Narayani M."/>
            <person name="Chadha A."/>
            <person name="Srivastava S."/>
        </authorList>
    </citation>
    <scope>TISSUE SPECIFICITY</scope>
    <scope>IDENTIFICATION BY MASS SPECTROMETRY</scope>
</reference>
<protein>
    <recommendedName>
        <fullName>Cycloviolacin-O8</fullName>
    </recommendedName>
    <alternativeName>
        <fullName>Cyclotide c1</fullName>
    </alternativeName>
</protein>
<comment type="function">
    <text>Probably participates in a plant defense mechanism.</text>
</comment>
<comment type="tissue specificity">
    <text evidence="4">Expressed in leaves, petals, petioles and roots but not in runners (at protein level).</text>
</comment>
<comment type="domain">
    <text>The presence of a 'disulfide through disulfide knot' structurally defines this protein as a knottin.</text>
</comment>
<comment type="PTM">
    <text>Cycloviolacin-O8 is a cyclic peptide.</text>
</comment>
<comment type="mass spectrometry" mass="3225.5" method="MALDI" evidence="3"/>
<comment type="similarity">
    <text evidence="2">Belongs to the cyclotide family. Bracelet subfamily.</text>
</comment>